<name>SMS_MOUSE</name>
<comment type="function">
    <molecule>Somatostatin-14</molecule>
    <text evidence="3">Inhibits the secretion of pituitary hormones, including that of growth hormone/somatotropin (GH1), PRL, ACTH, luteinizing hormone (LH) and TSH. Also impairs ghrelin- and GnRH-stimulated secretion of GH1 and LH; the inhibition of ghrelin-stimulated secretion of GH1 can be further increased by neuronostatin.</text>
</comment>
<comment type="function">
    <molecule>Neuronostatin</molecule>
    <text evidence="2 3 5 6 7">May enhance low-glucose-induced glucagon release by pancreatic alpha cells (PubMed:24735892). This effect may be mediated by binding to GPR107 and PKA activation (PubMed:26561648). May regulate cardiac contractile function (PubMed:25012062). May compromise cardiomyocyte viability (By similarity). In the central nervous system, may impair memory retention and may affect hippocampal excitability (By similarity). May also have anxiolytic and anorexigenic effects (By similarity). May play a role in arterial pressure regulation (By similarity). May inhibit basal, but not ghrelin- or GnRH-stimulated secretion of GH1 or LH, but does not affect the release of other pituitary hormones, including PRL, ACTH, FSH or TSH (By similarity). Potentiates inhibitory action of somatostatin on ghrelin-stimulated secretion of GH1, but not that on GnRH-stimulated secretion of LH (By similarity).</text>
</comment>
<comment type="subcellular location">
    <subcellularLocation>
        <location evidence="2">Secreted</location>
    </subcellularLocation>
</comment>
<comment type="tissue specificity">
    <text evidence="4">In the pancreas, somatostatin is expressed in delta cells of the islets of Langerhans. In the stomach, it is expressed in parietal cells of oxyntic mucosa and in the small intestine, it is found in the villus (at protein level) (PubMed:18753129). Neuronostatin is expressed in the pancreas in delta cells of the islets of Langerhans, as well as in the stomach, in parietal cells of oxyntic mucosa and in the small intestine, in the villus (at protein level) (PubMed:18753129).</text>
</comment>
<comment type="PTM">
    <text evidence="2">C-terminal amidation of the neuronostatin peptide is required for its biological activity, including for the regulation of mean arterial pressure.</text>
</comment>
<comment type="similarity">
    <text evidence="10">Belongs to the somatostatin family.</text>
</comment>
<accession>P60041</accession>
<accession>P01167</accession>
<protein>
    <recommendedName>
        <fullName>Somatostatin</fullName>
    </recommendedName>
    <component>
        <recommendedName>
            <fullName>Antrin</fullName>
        </recommendedName>
    </component>
    <component>
        <recommendedName>
            <fullName>Somatostatin-28</fullName>
        </recommendedName>
    </component>
    <component>
        <recommendedName>
            <fullName>Somatostatin-14</fullName>
        </recommendedName>
    </component>
    <component>
        <recommendedName>
            <fullName evidence="8">Neuronostatin</fullName>
            <shortName evidence="9">NST</shortName>
        </recommendedName>
    </component>
</protein>
<dbReference type="EMBL" id="X51468">
    <property type="protein sequence ID" value="CAA35831.1"/>
    <property type="molecule type" value="Genomic_DNA"/>
</dbReference>
<dbReference type="EMBL" id="BC010770">
    <property type="protein sequence ID" value="AAH10770.1"/>
    <property type="molecule type" value="mRNA"/>
</dbReference>
<dbReference type="CCDS" id="CCDS28080.1"/>
<dbReference type="PIR" id="S08416">
    <property type="entry name" value="RIMSS1"/>
</dbReference>
<dbReference type="RefSeq" id="NP_001404404.1">
    <property type="nucleotide sequence ID" value="NM_001417475.1"/>
</dbReference>
<dbReference type="RefSeq" id="NP_033241.1">
    <property type="nucleotide sequence ID" value="NM_009215.2"/>
</dbReference>
<dbReference type="BioGRID" id="203352">
    <property type="interactions" value="1"/>
</dbReference>
<dbReference type="FunCoup" id="P60041">
    <property type="interactions" value="570"/>
</dbReference>
<dbReference type="STRING" id="10090.ENSMUSP00000004480"/>
<dbReference type="GlyGen" id="P60041">
    <property type="glycosylation" value="1 site"/>
</dbReference>
<dbReference type="iPTMnet" id="P60041"/>
<dbReference type="PhosphoSitePlus" id="P60041"/>
<dbReference type="SwissPalm" id="P60041"/>
<dbReference type="PaxDb" id="10090-ENSMUSP00000004480"/>
<dbReference type="PeptideAtlas" id="P60041"/>
<dbReference type="ProteomicsDB" id="257526"/>
<dbReference type="ABCD" id="P60041">
    <property type="antibodies" value="1 sequenced antibody"/>
</dbReference>
<dbReference type="Antibodypedia" id="3518">
    <property type="antibodies" value="524 antibodies from 43 providers"/>
</dbReference>
<dbReference type="DNASU" id="20604"/>
<dbReference type="Ensembl" id="ENSMUST00000004480.5">
    <property type="protein sequence ID" value="ENSMUSP00000004480.4"/>
    <property type="gene ID" value="ENSMUSG00000004366.5"/>
</dbReference>
<dbReference type="GeneID" id="20604"/>
<dbReference type="KEGG" id="mmu:20604"/>
<dbReference type="UCSC" id="uc007ytx.1">
    <property type="organism name" value="mouse"/>
</dbReference>
<dbReference type="AGR" id="MGI:98326"/>
<dbReference type="CTD" id="6750"/>
<dbReference type="MGI" id="MGI:98326">
    <property type="gene designation" value="Sst"/>
</dbReference>
<dbReference type="VEuPathDB" id="HostDB:ENSMUSG00000004366"/>
<dbReference type="eggNOG" id="ENOG502S11K">
    <property type="taxonomic scope" value="Eukaryota"/>
</dbReference>
<dbReference type="GeneTree" id="ENSGT00510000047914"/>
<dbReference type="HOGENOM" id="CLU_124515_1_1_1"/>
<dbReference type="InParanoid" id="P60041"/>
<dbReference type="OMA" id="AEQDDMR"/>
<dbReference type="OrthoDB" id="9948948at2759"/>
<dbReference type="PhylomeDB" id="P60041"/>
<dbReference type="TreeFam" id="TF333185"/>
<dbReference type="Reactome" id="R-MMU-375276">
    <property type="pathway name" value="Peptide ligand-binding receptors"/>
</dbReference>
<dbReference type="Reactome" id="R-MMU-418594">
    <property type="pathway name" value="G alpha (i) signalling events"/>
</dbReference>
<dbReference type="BioGRID-ORCS" id="20604">
    <property type="hits" value="0 hits in 77 CRISPR screens"/>
</dbReference>
<dbReference type="CD-CODE" id="CE726F99">
    <property type="entry name" value="Postsynaptic density"/>
</dbReference>
<dbReference type="ChiTaRS" id="Lmx1a">
    <property type="organism name" value="mouse"/>
</dbReference>
<dbReference type="PRO" id="PR:P60041"/>
<dbReference type="Proteomes" id="UP000000589">
    <property type="component" value="Chromosome 16"/>
</dbReference>
<dbReference type="RNAct" id="P60041">
    <property type="molecule type" value="protein"/>
</dbReference>
<dbReference type="Bgee" id="ENSMUSG00000004366">
    <property type="expression patterns" value="Expressed in islet of Langerhans and 117 other cell types or tissues"/>
</dbReference>
<dbReference type="ExpressionAtlas" id="P60041">
    <property type="expression patterns" value="baseline and differential"/>
</dbReference>
<dbReference type="GO" id="GO:0005829">
    <property type="term" value="C:cytosol"/>
    <property type="evidence" value="ECO:0000314"/>
    <property type="project" value="MGI"/>
</dbReference>
<dbReference type="GO" id="GO:0005576">
    <property type="term" value="C:extracellular region"/>
    <property type="evidence" value="ECO:0000304"/>
    <property type="project" value="Reactome"/>
</dbReference>
<dbReference type="GO" id="GO:0005615">
    <property type="term" value="C:extracellular space"/>
    <property type="evidence" value="ECO:0000314"/>
    <property type="project" value="MGI"/>
</dbReference>
<dbReference type="GO" id="GO:0098982">
    <property type="term" value="C:GABA-ergic synapse"/>
    <property type="evidence" value="ECO:0000314"/>
    <property type="project" value="SynGO"/>
</dbReference>
<dbReference type="GO" id="GO:0043025">
    <property type="term" value="C:neuronal cell body"/>
    <property type="evidence" value="ECO:0007669"/>
    <property type="project" value="Ensembl"/>
</dbReference>
<dbReference type="GO" id="GO:0098992">
    <property type="term" value="C:neuronal dense core vesicle"/>
    <property type="evidence" value="ECO:0007669"/>
    <property type="project" value="Ensembl"/>
</dbReference>
<dbReference type="GO" id="GO:0005179">
    <property type="term" value="F:hormone activity"/>
    <property type="evidence" value="ECO:0007669"/>
    <property type="project" value="UniProtKB-KW"/>
</dbReference>
<dbReference type="GO" id="GO:0048018">
    <property type="term" value="F:receptor ligand activity"/>
    <property type="evidence" value="ECO:0000315"/>
    <property type="project" value="MGI"/>
</dbReference>
<dbReference type="GO" id="GO:0006972">
    <property type="term" value="P:hyperosmotic response"/>
    <property type="evidence" value="ECO:0007669"/>
    <property type="project" value="Ensembl"/>
</dbReference>
<dbReference type="GO" id="GO:0030334">
    <property type="term" value="P:regulation of cell migration"/>
    <property type="evidence" value="ECO:0000314"/>
    <property type="project" value="MGI"/>
</dbReference>
<dbReference type="GO" id="GO:0099072">
    <property type="term" value="P:regulation of postsynaptic membrane neurotransmitter receptor levels"/>
    <property type="evidence" value="ECO:0000314"/>
    <property type="project" value="SynGO"/>
</dbReference>
<dbReference type="GO" id="GO:0010447">
    <property type="term" value="P:response to acidic pH"/>
    <property type="evidence" value="ECO:0007669"/>
    <property type="project" value="Ensembl"/>
</dbReference>
<dbReference type="GO" id="GO:0043200">
    <property type="term" value="P:response to amino acid"/>
    <property type="evidence" value="ECO:0007669"/>
    <property type="project" value="Ensembl"/>
</dbReference>
<dbReference type="GO" id="GO:0048545">
    <property type="term" value="P:response to steroid hormone"/>
    <property type="evidence" value="ECO:0007669"/>
    <property type="project" value="Ensembl"/>
</dbReference>
<dbReference type="GO" id="GO:0009410">
    <property type="term" value="P:response to xenobiotic stimulus"/>
    <property type="evidence" value="ECO:0007669"/>
    <property type="project" value="Ensembl"/>
</dbReference>
<dbReference type="GO" id="GO:0038170">
    <property type="term" value="P:somatostatin signaling pathway"/>
    <property type="evidence" value="ECO:0000315"/>
    <property type="project" value="MGI"/>
</dbReference>
<dbReference type="InterPro" id="IPR004250">
    <property type="entry name" value="Somatostatin"/>
</dbReference>
<dbReference type="InterPro" id="IPR018142">
    <property type="entry name" value="Somatostatin/Cortistatin_C"/>
</dbReference>
<dbReference type="PANTHER" id="PTHR10558">
    <property type="entry name" value="SOMATOSTATIN"/>
    <property type="match status" value="1"/>
</dbReference>
<dbReference type="PANTHER" id="PTHR10558:SF2">
    <property type="entry name" value="SOMATOSTATIN"/>
    <property type="match status" value="1"/>
</dbReference>
<dbReference type="Pfam" id="PF03002">
    <property type="entry name" value="Somatostatin"/>
    <property type="match status" value="1"/>
</dbReference>
<dbReference type="PIRSF" id="PIRSF001814">
    <property type="entry name" value="Somatostatin"/>
    <property type="match status" value="1"/>
</dbReference>
<organism>
    <name type="scientific">Mus musculus</name>
    <name type="common">Mouse</name>
    <dbReference type="NCBI Taxonomy" id="10090"/>
    <lineage>
        <taxon>Eukaryota</taxon>
        <taxon>Metazoa</taxon>
        <taxon>Chordata</taxon>
        <taxon>Craniata</taxon>
        <taxon>Vertebrata</taxon>
        <taxon>Euteleostomi</taxon>
        <taxon>Mammalia</taxon>
        <taxon>Eutheria</taxon>
        <taxon>Euarchontoglires</taxon>
        <taxon>Glires</taxon>
        <taxon>Rodentia</taxon>
        <taxon>Myomorpha</taxon>
        <taxon>Muroidea</taxon>
        <taxon>Muridae</taxon>
        <taxon>Murinae</taxon>
        <taxon>Mus</taxon>
        <taxon>Mus</taxon>
    </lineage>
</organism>
<feature type="signal peptide" evidence="1">
    <location>
        <begin position="1"/>
        <end position="24"/>
    </location>
</feature>
<feature type="peptide" id="PRO_0000033092" description="Antrin">
    <location>
        <begin position="25"/>
        <end position="34"/>
    </location>
</feature>
<feature type="peptide" id="PRO_0000447377" description="Neuronostatin" evidence="2">
    <location>
        <begin position="31"/>
        <end position="43"/>
    </location>
</feature>
<feature type="propeptide" id="PRO_0000033093" evidence="1">
    <location>
        <begin position="35"/>
        <end position="88"/>
    </location>
</feature>
<feature type="peptide" id="PRO_0000033094" description="Somatostatin-28">
    <location>
        <begin position="89"/>
        <end position="116"/>
    </location>
</feature>
<feature type="peptide" id="PRO_0000033095" description="Somatostatin-14">
    <location>
        <begin position="103"/>
        <end position="116"/>
    </location>
</feature>
<feature type="modified residue" description="Threonine amide" evidence="2">
    <location>
        <position position="43"/>
    </location>
</feature>
<feature type="disulfide bond" evidence="1">
    <location>
        <begin position="105"/>
        <end position="116"/>
    </location>
</feature>
<proteinExistence type="evidence at protein level"/>
<keyword id="KW-0027">Amidation</keyword>
<keyword id="KW-0165">Cleavage on pair of basic residues</keyword>
<keyword id="KW-1015">Disulfide bond</keyword>
<keyword id="KW-0372">Hormone</keyword>
<keyword id="KW-1185">Reference proteome</keyword>
<keyword id="KW-0964">Secreted</keyword>
<keyword id="KW-0732">Signal</keyword>
<gene>
    <name type="primary">Sst</name>
    <name type="synonym">Smst</name>
</gene>
<evidence type="ECO:0000250" key="1"/>
<evidence type="ECO:0000250" key="2">
    <source>
        <dbReference type="UniProtKB" id="P60042"/>
    </source>
</evidence>
<evidence type="ECO:0000250" key="3">
    <source>
        <dbReference type="UniProtKB" id="P61278"/>
    </source>
</evidence>
<evidence type="ECO:0000269" key="4">
    <source>
    </source>
</evidence>
<evidence type="ECO:0000269" key="5">
    <source>
    </source>
</evidence>
<evidence type="ECO:0000269" key="6">
    <source>
    </source>
</evidence>
<evidence type="ECO:0000269" key="7">
    <source>
    </source>
</evidence>
<evidence type="ECO:0000303" key="8">
    <source>
    </source>
</evidence>
<evidence type="ECO:0000303" key="9">
    <source>
    </source>
</evidence>
<evidence type="ECO:0000305" key="10"/>
<sequence>MLSCRLQCALAALCIVLALGGVTGAPSDPRLRQFLQKSLAAATGKQELAKYFLAELLSEPNQTENDALEPEDLPQAAEQDEMRLELQRSANSNPAMAPRERKAGCKNFFWKTFTSC</sequence>
<reference key="1">
    <citation type="journal article" date="1990" name="Nucleic Acids Res.">
        <title>Nucleotide sequence of the mouse preprosomatostatin gene.</title>
        <authorList>
            <person name="Fuhrmann G."/>
            <person name="Heilig R."/>
            <person name="Kempf J."/>
            <person name="Ebel A."/>
        </authorList>
    </citation>
    <scope>NUCLEOTIDE SEQUENCE [GENOMIC DNA]</scope>
    <source>
        <tissue>Brain</tissue>
    </source>
</reference>
<reference key="2">
    <citation type="journal article" date="2004" name="Genome Res.">
        <title>The status, quality, and expansion of the NIH full-length cDNA project: the Mammalian Gene Collection (MGC).</title>
        <authorList>
            <consortium name="The MGC Project Team"/>
        </authorList>
    </citation>
    <scope>NUCLEOTIDE SEQUENCE [LARGE SCALE MRNA]</scope>
    <source>
        <strain>FVB/N</strain>
        <tissue>Colon</tissue>
    </source>
</reference>
<reference key="3">
    <citation type="journal article" date="2008" name="J. Biol. Chem.">
        <title>Neuronostatin encoded by the somatostatin gene regulates neuronal, cardiovascular, and metabolic functions.</title>
        <authorList>
            <person name="Samson W.K."/>
            <person name="Zhang J.V."/>
            <person name="Avsian-Kretchmer O."/>
            <person name="Cui K."/>
            <person name="Yosten G.L."/>
            <person name="Klein C."/>
            <person name="Lyu R.M."/>
            <person name="Wang Y.X."/>
            <person name="Chen X.Q."/>
            <person name="Yang J."/>
            <person name="Price C.J."/>
            <person name="Hoyda T.D."/>
            <person name="Ferguson A.V."/>
            <person name="Yuan X.B."/>
            <person name="Chang J.K."/>
            <person name="Hsueh A.J."/>
        </authorList>
    </citation>
    <scope>TISSUE SPECIFICITY (NEURONOSTATIN)</scope>
    <source>
        <tissue>Pancreas</tissue>
    </source>
</reference>
<reference key="4">
    <citation type="journal article" date="2014" name="Am. J. Physiol.">
        <title>Neuronostatin inhibits glucose-stimulated insulin secretion via direct action on the pancreatic alpha-cell.</title>
        <authorList>
            <person name="Salvatori A.S."/>
            <person name="Elrick M.M."/>
            <person name="Samson W.K."/>
            <person name="Corbett J.A."/>
            <person name="Yosten G.L."/>
        </authorList>
    </citation>
    <scope>FUNCTION (NEURONOSTATIN)</scope>
</reference>
<reference key="5">
    <citation type="journal article" date="2014" name="Cell. Physiol. Biochem.">
        <title>Neuronostatin attenuates myocardial contractile function through inhibition of sarcoplasmic reticulum Ca2+-ATPase in murine heart.</title>
        <authorList>
            <person name="Zhu X."/>
            <person name="Hu N."/>
            <person name="Chen X."/>
            <person name="Zhu M.Z."/>
            <person name="Dong H."/>
            <person name="Xu X."/>
            <person name="Luo F."/>
            <person name="Hua Y."/>
            <person name="Nair S."/>
            <person name="Samson W.K."/>
            <person name="Xiong L."/>
        </authorList>
    </citation>
    <scope>FUNCTION (NEURONOSTATIN)</scope>
</reference>
<reference key="6">
    <citation type="journal article" date="2016" name="Am. J. Physiol.">
        <title>Neuronostatin acts via GPR107 to increase cAMP-independent PKA phosphorylation and proglucagon mRNA accumulation in pancreatic alpha-cells.</title>
        <authorList>
            <person name="Elrick M.M."/>
            <person name="Samson W.K."/>
            <person name="Corbett J.A."/>
            <person name="Salvatori A.S."/>
            <person name="Stein L.M."/>
            <person name="Kolar G.R."/>
            <person name="Naatz A."/>
            <person name="Yosten G.L."/>
        </authorList>
    </citation>
    <scope>FUNCTION (NEURONOSTATIN)</scope>
</reference>